<keyword id="KW-0072">Autophagy</keyword>
<keyword id="KW-0175">Coiled coil</keyword>
<keyword id="KW-0963">Cytoplasm</keyword>
<keyword id="KW-0472">Membrane</keyword>
<keyword id="KW-0653">Protein transport</keyword>
<keyword id="KW-0813">Transport</keyword>
<evidence type="ECO:0000250" key="1"/>
<evidence type="ECO:0000255" key="2"/>
<evidence type="ECO:0000256" key="3">
    <source>
        <dbReference type="SAM" id="MobiDB-lite"/>
    </source>
</evidence>
<evidence type="ECO:0000305" key="4"/>
<dbReference type="EMBL" id="AAFW02000171">
    <property type="protein sequence ID" value="EDN59329.1"/>
    <property type="molecule type" value="Genomic_DNA"/>
</dbReference>
<dbReference type="SMR" id="A7A1V1"/>
<dbReference type="HOGENOM" id="CLU_051067_0_0_1"/>
<dbReference type="Proteomes" id="UP000007060">
    <property type="component" value="Unassembled WGS sequence"/>
</dbReference>
<dbReference type="GO" id="GO:0034045">
    <property type="term" value="C:phagophore assembly site membrane"/>
    <property type="evidence" value="ECO:0007669"/>
    <property type="project" value="UniProtKB-SubCell"/>
</dbReference>
<dbReference type="GO" id="GO:0006914">
    <property type="term" value="P:autophagy"/>
    <property type="evidence" value="ECO:0007669"/>
    <property type="project" value="UniProtKB-KW"/>
</dbReference>
<dbReference type="GO" id="GO:0015031">
    <property type="term" value="P:protein transport"/>
    <property type="evidence" value="ECO:0007669"/>
    <property type="project" value="UniProtKB-KW"/>
</dbReference>
<comment type="function">
    <text evidence="1">Required for cytoplasm to vacuole transport (Cvt) vesicle formation and efficient autophagy. Plays a role in ATG protein retrieval from the pre-autophagosomal structure (PAS) and is especially required for autophagy-dependent cycling of ATG9. Also plays a role in regulation of filamentous growth (By similarity).</text>
</comment>
<comment type="subunit">
    <text evidence="1">Forms a complex with ATG9 and ATG27.</text>
</comment>
<comment type="subcellular location">
    <subcellularLocation>
        <location evidence="1">Cytoplasm</location>
    </subcellularLocation>
    <subcellularLocation>
        <location evidence="1">Preautophagosomal structure membrane</location>
        <topology evidence="1">Peripheral membrane protein</topology>
    </subcellularLocation>
    <subcellularLocation>
        <location evidence="1">Membrane</location>
        <topology evidence="1">Peripheral membrane protein</topology>
    </subcellularLocation>
    <text evidence="1">Found in pre-autophagosomal structure and other punctate structures. Correct localization of ATG23 to the membranes is strictly dependent of ATG9. Cycling through the pre-autophagosomal structure and correct location to other punctate structures is ATG1- and ATG13-dependent (By similarity).</text>
</comment>
<comment type="similarity">
    <text evidence="4">Belongs to the ATG23 family.</text>
</comment>
<feature type="chain" id="PRO_0000318038" description="Autophagy-related protein 23">
    <location>
        <begin position="1"/>
        <end position="453"/>
    </location>
</feature>
<feature type="region of interest" description="Disordered" evidence="3">
    <location>
        <begin position="380"/>
        <end position="428"/>
    </location>
</feature>
<feature type="region of interest" description="Disordered" evidence="3">
    <location>
        <begin position="434"/>
        <end position="453"/>
    </location>
</feature>
<feature type="coiled-coil region" evidence="2">
    <location>
        <begin position="144"/>
        <end position="213"/>
    </location>
</feature>
<feature type="compositionally biased region" description="Polar residues" evidence="3">
    <location>
        <begin position="384"/>
        <end position="395"/>
    </location>
</feature>
<feature type="compositionally biased region" description="Polar residues" evidence="3">
    <location>
        <begin position="408"/>
        <end position="422"/>
    </location>
</feature>
<accession>A7A1V1</accession>
<name>ATG23_YEAS7</name>
<gene>
    <name type="primary">ATG23</name>
    <name type="ORF">SCY_3979</name>
</gene>
<reference key="1">
    <citation type="journal article" date="2007" name="Proc. Natl. Acad. Sci. U.S.A.">
        <title>Genome sequencing and comparative analysis of Saccharomyces cerevisiae strain YJM789.</title>
        <authorList>
            <person name="Wei W."/>
            <person name="McCusker J.H."/>
            <person name="Hyman R.W."/>
            <person name="Jones T."/>
            <person name="Ning Y."/>
            <person name="Cao Z."/>
            <person name="Gu Z."/>
            <person name="Bruno D."/>
            <person name="Miranda M."/>
            <person name="Nguyen M."/>
            <person name="Wilhelmy J."/>
            <person name="Komp C."/>
            <person name="Tamse R."/>
            <person name="Wang X."/>
            <person name="Jia P."/>
            <person name="Luedi P."/>
            <person name="Oefner P.J."/>
            <person name="David L."/>
            <person name="Dietrich F.S."/>
            <person name="Li Y."/>
            <person name="Davis R.W."/>
            <person name="Steinmetz L.M."/>
        </authorList>
    </citation>
    <scope>NUCLEOTIDE SEQUENCE [LARGE SCALE GENOMIC DNA]</scope>
    <source>
        <strain>YJM789</strain>
    </source>
</reference>
<protein>
    <recommendedName>
        <fullName>Autophagy-related protein 23</fullName>
    </recommendedName>
</protein>
<sequence length="453" mass="51537">MELNQVLEKKEQILQYLGTLVGLHEKALSDVNSASQVTSIRKDITICLNDLCRINDLLVSHDGLLKREIGSLLRDKQELLELNEREQLLWKERKSWHIEQETDAAPADYVIDKDAIITISSHHRTSLNKYIESVGAENTILSNTDDSDAMIEEVQNAESSADQMIRNYKLLQLSHKQAKSEIIRLETLLRDFKKDNKFIEEELKRQSGRIRSEMGNIDFHLSKIEESKHQLMKRIGFESPLTQEKSLSEKIFNLRLSSADEDYNERQTINMKNFVHMKDLIELKIEDLQEQLTRNKNESSTVLTQRELWLDCQKKVGDLESKLITKLRSSSNSKIPPNEMSEMINSTIQYLNNLLDSSDEKLTTTLISNERDVLSKACEELHSESTTPQDGSSALPSKPIDIHKSHKGSNASSNLKQPSTPSFLVASKSPPKIGISESVVNANKNDAISKKVE</sequence>
<proteinExistence type="inferred from homology"/>
<organism>
    <name type="scientific">Saccharomyces cerevisiae (strain YJM789)</name>
    <name type="common">Baker's yeast</name>
    <dbReference type="NCBI Taxonomy" id="307796"/>
    <lineage>
        <taxon>Eukaryota</taxon>
        <taxon>Fungi</taxon>
        <taxon>Dikarya</taxon>
        <taxon>Ascomycota</taxon>
        <taxon>Saccharomycotina</taxon>
        <taxon>Saccharomycetes</taxon>
        <taxon>Saccharomycetales</taxon>
        <taxon>Saccharomycetaceae</taxon>
        <taxon>Saccharomyces</taxon>
    </lineage>
</organism>